<accession>Q91955</accession>
<accession>Q5ZHL6</accession>
<keyword id="KW-0040">ANK repeat</keyword>
<keyword id="KW-0963">Cytoplasm</keyword>
<keyword id="KW-0539">Nucleus</keyword>
<keyword id="KW-1185">Reference proteome</keyword>
<keyword id="KW-0677">Repeat</keyword>
<reference key="1">
    <citation type="journal article" date="1996" name="Int. J. Dev. Biol.">
        <title>Characterization of terminally differentiated cell state by categorizing cDNA clones derived from chicken lens fibers.</title>
        <authorList>
            <person name="Sawada K."/>
            <person name="Agata K."/>
            <person name="Eguchi G."/>
        </authorList>
    </citation>
    <scope>NUCLEOTIDE SEQUENCE [MRNA]</scope>
    <source>
        <tissue>Lens fibers</tissue>
    </source>
</reference>
<reference key="2">
    <citation type="journal article" date="2005" name="Genome Biol.">
        <title>Full-length cDNAs from chicken bursal lymphocytes to facilitate gene function analysis.</title>
        <authorList>
            <person name="Caldwell R.B."/>
            <person name="Kierzek A.M."/>
            <person name="Arakawa H."/>
            <person name="Bezzubov Y."/>
            <person name="Zaim J."/>
            <person name="Fiedler P."/>
            <person name="Kutter S."/>
            <person name="Blagodatski A."/>
            <person name="Kostovska D."/>
            <person name="Koter M."/>
            <person name="Plachy J."/>
            <person name="Carninci P."/>
            <person name="Hayashizaki Y."/>
            <person name="Buerstedde J.-M."/>
        </authorList>
    </citation>
    <scope>NUCLEOTIDE SEQUENCE [LARGE SCALE MRNA]</scope>
    <source>
        <strain>CB</strain>
        <tissue>Bursa of Fabricius</tissue>
    </source>
</reference>
<proteinExistence type="inferred from homology"/>
<organism>
    <name type="scientific">Gallus gallus</name>
    <name type="common">Chicken</name>
    <dbReference type="NCBI Taxonomy" id="9031"/>
    <lineage>
        <taxon>Eukaryota</taxon>
        <taxon>Metazoa</taxon>
        <taxon>Chordata</taxon>
        <taxon>Craniata</taxon>
        <taxon>Vertebrata</taxon>
        <taxon>Euteleostomi</taxon>
        <taxon>Archelosauria</taxon>
        <taxon>Archosauria</taxon>
        <taxon>Dinosauria</taxon>
        <taxon>Saurischia</taxon>
        <taxon>Theropoda</taxon>
        <taxon>Coelurosauria</taxon>
        <taxon>Aves</taxon>
        <taxon>Neognathae</taxon>
        <taxon>Galloanserae</taxon>
        <taxon>Galliformes</taxon>
        <taxon>Phasianidae</taxon>
        <taxon>Phasianinae</taxon>
        <taxon>Gallus</taxon>
    </lineage>
</organism>
<name>MTPN_CHICK</name>
<protein>
    <recommendedName>
        <fullName>Myotrophin</fullName>
    </recommendedName>
    <alternativeName>
        <fullName>Granule cell differentiation protein</fullName>
    </alternativeName>
    <alternativeName>
        <fullName>Protein V-1</fullName>
    </alternativeName>
</protein>
<feature type="chain" id="PRO_0000067034" description="Myotrophin">
    <location>
        <begin position="1"/>
        <end position="118"/>
    </location>
</feature>
<feature type="repeat" description="ANK 1">
    <location>
        <begin position="1"/>
        <end position="30"/>
    </location>
</feature>
<feature type="repeat" description="ANK 2">
    <location>
        <begin position="34"/>
        <end position="65"/>
    </location>
</feature>
<feature type="repeat" description="ANK 3">
    <location>
        <begin position="67"/>
        <end position="98"/>
    </location>
</feature>
<comment type="function">
    <text evidence="1">Regulates NF-kappa-B transcription factor activity. Promotes growth of cardiomyocytes, but not cardiomyocyte proliferation. Promotes cardiac muscle hypertrophy. Plays a role in the regulation of the growth of actin filaments. Inhibits the activity of the F-actin-capping protein complex (By similarity).</text>
</comment>
<comment type="subcellular location">
    <subcellularLocation>
        <location evidence="1">Cytoplasm</location>
    </subcellularLocation>
    <subcellularLocation>
        <location evidence="1">Nucleus</location>
    </subcellularLocation>
    <subcellularLocation>
        <location evidence="1">Cytoplasm</location>
        <location evidence="1">Perinuclear region</location>
    </subcellularLocation>
</comment>
<comment type="similarity">
    <text evidence="2">Belongs to the myotrophin family.</text>
</comment>
<dbReference type="EMBL" id="D26326">
    <property type="protein sequence ID" value="BAA05379.1"/>
    <property type="molecule type" value="mRNA"/>
</dbReference>
<dbReference type="EMBL" id="AJ720711">
    <property type="protein sequence ID" value="CAG32370.1"/>
    <property type="molecule type" value="mRNA"/>
</dbReference>
<dbReference type="EMBL" id="AJ721118">
    <property type="protein sequence ID" value="CAG32777.1"/>
    <property type="molecule type" value="mRNA"/>
</dbReference>
<dbReference type="RefSeq" id="NP_990217.1">
    <property type="nucleotide sequence ID" value="NM_204886.2"/>
</dbReference>
<dbReference type="SMR" id="Q91955"/>
<dbReference type="FunCoup" id="Q91955">
    <property type="interactions" value="2140"/>
</dbReference>
<dbReference type="STRING" id="9031.ENSGALP00000056408"/>
<dbReference type="PaxDb" id="9031-ENSGALP00000042167"/>
<dbReference type="GeneID" id="395702"/>
<dbReference type="KEGG" id="gga:395702"/>
<dbReference type="CTD" id="136319"/>
<dbReference type="VEuPathDB" id="HostDB:geneid_395702"/>
<dbReference type="eggNOG" id="KOG4214">
    <property type="taxonomic scope" value="Eukaryota"/>
</dbReference>
<dbReference type="InParanoid" id="Q91955"/>
<dbReference type="OrthoDB" id="194358at2759"/>
<dbReference type="PhylomeDB" id="Q91955"/>
<dbReference type="PRO" id="PR:Q91955"/>
<dbReference type="Proteomes" id="UP000000539">
    <property type="component" value="Chromosome 1"/>
</dbReference>
<dbReference type="Bgee" id="ENSGALG00000041619">
    <property type="expression patterns" value="Expressed in spleen and 13 other cell types or tissues"/>
</dbReference>
<dbReference type="GO" id="GO:0030424">
    <property type="term" value="C:axon"/>
    <property type="evidence" value="ECO:0000250"/>
    <property type="project" value="AgBase"/>
</dbReference>
<dbReference type="GO" id="GO:0005737">
    <property type="term" value="C:cytoplasm"/>
    <property type="evidence" value="ECO:0000250"/>
    <property type="project" value="AgBase"/>
</dbReference>
<dbReference type="GO" id="GO:0005829">
    <property type="term" value="C:cytosol"/>
    <property type="evidence" value="ECO:0000250"/>
    <property type="project" value="UniProtKB"/>
</dbReference>
<dbReference type="GO" id="GO:0005634">
    <property type="term" value="C:nucleus"/>
    <property type="evidence" value="ECO:0000250"/>
    <property type="project" value="UniProtKB"/>
</dbReference>
<dbReference type="GO" id="GO:0048471">
    <property type="term" value="C:perinuclear region of cytoplasm"/>
    <property type="evidence" value="ECO:0007669"/>
    <property type="project" value="UniProtKB-SubCell"/>
</dbReference>
<dbReference type="GO" id="GO:0010613">
    <property type="term" value="P:positive regulation of cardiac muscle hypertrophy"/>
    <property type="evidence" value="ECO:0000250"/>
    <property type="project" value="UniProtKB"/>
</dbReference>
<dbReference type="GO" id="GO:0030307">
    <property type="term" value="P:positive regulation of cell growth"/>
    <property type="evidence" value="ECO:0000250"/>
    <property type="project" value="UniProtKB"/>
</dbReference>
<dbReference type="GO" id="GO:0010557">
    <property type="term" value="P:positive regulation of macromolecule biosynthetic process"/>
    <property type="evidence" value="ECO:0000250"/>
    <property type="project" value="UniProtKB"/>
</dbReference>
<dbReference type="GO" id="GO:0051092">
    <property type="term" value="P:positive regulation of NF-kappaB transcription factor activity"/>
    <property type="evidence" value="ECO:0000250"/>
    <property type="project" value="UniProtKB"/>
</dbReference>
<dbReference type="GO" id="GO:0051247">
    <property type="term" value="P:positive regulation of protein metabolic process"/>
    <property type="evidence" value="ECO:0000250"/>
    <property type="project" value="UniProtKB"/>
</dbReference>
<dbReference type="GO" id="GO:2000812">
    <property type="term" value="P:regulation of barbed-end actin filament capping"/>
    <property type="evidence" value="ECO:0000250"/>
    <property type="project" value="UniProtKB"/>
</dbReference>
<dbReference type="FunFam" id="1.25.40.20:FF:000118">
    <property type="entry name" value="Myotrophin"/>
    <property type="match status" value="1"/>
</dbReference>
<dbReference type="Gene3D" id="1.25.40.20">
    <property type="entry name" value="Ankyrin repeat-containing domain"/>
    <property type="match status" value="1"/>
</dbReference>
<dbReference type="InterPro" id="IPR002110">
    <property type="entry name" value="Ankyrin_rpt"/>
</dbReference>
<dbReference type="InterPro" id="IPR036770">
    <property type="entry name" value="Ankyrin_rpt-contain_sf"/>
</dbReference>
<dbReference type="PANTHER" id="PTHR24171">
    <property type="entry name" value="ANKYRIN REPEAT DOMAIN-CONTAINING PROTEIN 39-RELATED"/>
    <property type="match status" value="1"/>
</dbReference>
<dbReference type="PANTHER" id="PTHR24171:SF8">
    <property type="entry name" value="BRCA1-ASSOCIATED RING DOMAIN PROTEIN 1"/>
    <property type="match status" value="1"/>
</dbReference>
<dbReference type="Pfam" id="PF12796">
    <property type="entry name" value="Ank_2"/>
    <property type="match status" value="1"/>
</dbReference>
<dbReference type="PRINTS" id="PR01415">
    <property type="entry name" value="ANKYRIN"/>
</dbReference>
<dbReference type="SMART" id="SM00248">
    <property type="entry name" value="ANK"/>
    <property type="match status" value="2"/>
</dbReference>
<dbReference type="SUPFAM" id="SSF48403">
    <property type="entry name" value="Ankyrin repeat"/>
    <property type="match status" value="1"/>
</dbReference>
<dbReference type="PROSITE" id="PS50297">
    <property type="entry name" value="ANK_REP_REGION"/>
    <property type="match status" value="1"/>
</dbReference>
<dbReference type="PROSITE" id="PS50088">
    <property type="entry name" value="ANK_REPEAT"/>
    <property type="match status" value="2"/>
</dbReference>
<sequence>MSDKEFMWALKNGDLDEVKDYVAKGEDVNRTLEGGRKPLHYAADCGQLEILEFLLLKGADINAPDKHNITPLLSAVYEGHVSCVKLLLSKGADKTVKGPDGLTAFEATDNQAIKTLLQ</sequence>
<gene>
    <name type="primary">MTPN</name>
    <name type="ORF">RCJMB04_23o21</name>
    <name type="ORF">RCJMB04_35l16</name>
</gene>
<evidence type="ECO:0000250" key="1"/>
<evidence type="ECO:0000305" key="2"/>